<name>SELO_SYNY3</name>
<evidence type="ECO:0000255" key="1">
    <source>
        <dbReference type="HAMAP-Rule" id="MF_00692"/>
    </source>
</evidence>
<evidence type="ECO:0000305" key="2"/>
<keyword id="KW-0067">ATP-binding</keyword>
<keyword id="KW-0460">Magnesium</keyword>
<keyword id="KW-0464">Manganese</keyword>
<keyword id="KW-0479">Metal-binding</keyword>
<keyword id="KW-0547">Nucleotide-binding</keyword>
<keyword id="KW-0548">Nucleotidyltransferase</keyword>
<keyword id="KW-1185">Reference proteome</keyword>
<keyword id="KW-0808">Transferase</keyword>
<proteinExistence type="inferred from homology"/>
<feature type="chain" id="PRO_0000121432" description="Protein nucleotidyltransferase YdiU">
    <location>
        <begin position="1"/>
        <end position="477"/>
    </location>
</feature>
<feature type="active site" description="Proton acceptor" evidence="1">
    <location>
        <position position="257"/>
    </location>
</feature>
<feature type="binding site" evidence="1">
    <location>
        <position position="89"/>
    </location>
    <ligand>
        <name>ATP</name>
        <dbReference type="ChEBI" id="CHEBI:30616"/>
    </ligand>
</feature>
<feature type="binding site" evidence="1">
    <location>
        <position position="91"/>
    </location>
    <ligand>
        <name>ATP</name>
        <dbReference type="ChEBI" id="CHEBI:30616"/>
    </ligand>
</feature>
<feature type="binding site" evidence="1">
    <location>
        <position position="92"/>
    </location>
    <ligand>
        <name>ATP</name>
        <dbReference type="ChEBI" id="CHEBI:30616"/>
    </ligand>
</feature>
<feature type="binding site" evidence="1">
    <location>
        <position position="112"/>
    </location>
    <ligand>
        <name>ATP</name>
        <dbReference type="ChEBI" id="CHEBI:30616"/>
    </ligand>
</feature>
<feature type="binding site" evidence="1">
    <location>
        <position position="124"/>
    </location>
    <ligand>
        <name>ATP</name>
        <dbReference type="ChEBI" id="CHEBI:30616"/>
    </ligand>
</feature>
<feature type="binding site" evidence="1">
    <location>
        <position position="125"/>
    </location>
    <ligand>
        <name>ATP</name>
        <dbReference type="ChEBI" id="CHEBI:30616"/>
    </ligand>
</feature>
<feature type="binding site" evidence="1">
    <location>
        <position position="178"/>
    </location>
    <ligand>
        <name>ATP</name>
        <dbReference type="ChEBI" id="CHEBI:30616"/>
    </ligand>
</feature>
<feature type="binding site" evidence="1">
    <location>
        <position position="185"/>
    </location>
    <ligand>
        <name>ATP</name>
        <dbReference type="ChEBI" id="CHEBI:30616"/>
    </ligand>
</feature>
<feature type="binding site" evidence="1">
    <location>
        <position position="258"/>
    </location>
    <ligand>
        <name>Mg(2+)</name>
        <dbReference type="ChEBI" id="CHEBI:18420"/>
    </ligand>
</feature>
<feature type="binding site" evidence="1">
    <location>
        <position position="267"/>
    </location>
    <ligand>
        <name>ATP</name>
        <dbReference type="ChEBI" id="CHEBI:30616"/>
    </ligand>
</feature>
<feature type="binding site" evidence="1">
    <location>
        <position position="267"/>
    </location>
    <ligand>
        <name>Mg(2+)</name>
        <dbReference type="ChEBI" id="CHEBI:18420"/>
    </ligand>
</feature>
<accession>P73436</accession>
<reference key="1">
    <citation type="journal article" date="1996" name="DNA Res.">
        <title>Sequence analysis of the genome of the unicellular cyanobacterium Synechocystis sp. strain PCC6803. II. Sequence determination of the entire genome and assignment of potential protein-coding regions.</title>
        <authorList>
            <person name="Kaneko T."/>
            <person name="Sato S."/>
            <person name="Kotani H."/>
            <person name="Tanaka A."/>
            <person name="Asamizu E."/>
            <person name="Nakamura Y."/>
            <person name="Miyajima N."/>
            <person name="Hirosawa M."/>
            <person name="Sugiura M."/>
            <person name="Sasamoto S."/>
            <person name="Kimura T."/>
            <person name="Hosouchi T."/>
            <person name="Matsuno A."/>
            <person name="Muraki A."/>
            <person name="Nakazaki N."/>
            <person name="Naruo K."/>
            <person name="Okumura S."/>
            <person name="Shimpo S."/>
            <person name="Takeuchi C."/>
            <person name="Wada T."/>
            <person name="Watanabe A."/>
            <person name="Yamada M."/>
            <person name="Yasuda M."/>
            <person name="Tabata S."/>
        </authorList>
    </citation>
    <scope>NUCLEOTIDE SEQUENCE [LARGE SCALE GENOMIC DNA]</scope>
    <source>
        <strain>ATCC 27184 / PCC 6803 / Kazusa</strain>
    </source>
</reference>
<comment type="function">
    <text evidence="1">Nucleotidyltransferase involved in the post-translational modification of proteins. It can catalyze the addition of adenosine monophosphate (AMP) or uridine monophosphate (UMP) to a protein, resulting in modifications known as AMPylation and UMPylation.</text>
</comment>
<comment type="catalytic activity">
    <reaction evidence="1">
        <text>L-seryl-[protein] + ATP = 3-O-(5'-adenylyl)-L-seryl-[protein] + diphosphate</text>
        <dbReference type="Rhea" id="RHEA:58120"/>
        <dbReference type="Rhea" id="RHEA-COMP:9863"/>
        <dbReference type="Rhea" id="RHEA-COMP:15073"/>
        <dbReference type="ChEBI" id="CHEBI:29999"/>
        <dbReference type="ChEBI" id="CHEBI:30616"/>
        <dbReference type="ChEBI" id="CHEBI:33019"/>
        <dbReference type="ChEBI" id="CHEBI:142516"/>
        <dbReference type="EC" id="2.7.7.108"/>
    </reaction>
</comment>
<comment type="catalytic activity">
    <reaction evidence="1">
        <text>L-threonyl-[protein] + ATP = 3-O-(5'-adenylyl)-L-threonyl-[protein] + diphosphate</text>
        <dbReference type="Rhea" id="RHEA:54292"/>
        <dbReference type="Rhea" id="RHEA-COMP:11060"/>
        <dbReference type="Rhea" id="RHEA-COMP:13847"/>
        <dbReference type="ChEBI" id="CHEBI:30013"/>
        <dbReference type="ChEBI" id="CHEBI:30616"/>
        <dbReference type="ChEBI" id="CHEBI:33019"/>
        <dbReference type="ChEBI" id="CHEBI:138113"/>
        <dbReference type="EC" id="2.7.7.108"/>
    </reaction>
</comment>
<comment type="catalytic activity">
    <reaction evidence="1">
        <text>L-tyrosyl-[protein] + ATP = O-(5'-adenylyl)-L-tyrosyl-[protein] + diphosphate</text>
        <dbReference type="Rhea" id="RHEA:54288"/>
        <dbReference type="Rhea" id="RHEA-COMP:10136"/>
        <dbReference type="Rhea" id="RHEA-COMP:13846"/>
        <dbReference type="ChEBI" id="CHEBI:30616"/>
        <dbReference type="ChEBI" id="CHEBI:33019"/>
        <dbReference type="ChEBI" id="CHEBI:46858"/>
        <dbReference type="ChEBI" id="CHEBI:83624"/>
        <dbReference type="EC" id="2.7.7.108"/>
    </reaction>
</comment>
<comment type="catalytic activity">
    <reaction evidence="1">
        <text>L-histidyl-[protein] + UTP = N(tele)-(5'-uridylyl)-L-histidyl-[protein] + diphosphate</text>
        <dbReference type="Rhea" id="RHEA:83891"/>
        <dbReference type="Rhea" id="RHEA-COMP:9745"/>
        <dbReference type="Rhea" id="RHEA-COMP:20239"/>
        <dbReference type="ChEBI" id="CHEBI:29979"/>
        <dbReference type="ChEBI" id="CHEBI:33019"/>
        <dbReference type="ChEBI" id="CHEBI:46398"/>
        <dbReference type="ChEBI" id="CHEBI:233474"/>
    </reaction>
</comment>
<comment type="catalytic activity">
    <reaction evidence="1">
        <text>L-seryl-[protein] + UTP = O-(5'-uridylyl)-L-seryl-[protein] + diphosphate</text>
        <dbReference type="Rhea" id="RHEA:64604"/>
        <dbReference type="Rhea" id="RHEA-COMP:9863"/>
        <dbReference type="Rhea" id="RHEA-COMP:16635"/>
        <dbReference type="ChEBI" id="CHEBI:29999"/>
        <dbReference type="ChEBI" id="CHEBI:33019"/>
        <dbReference type="ChEBI" id="CHEBI:46398"/>
        <dbReference type="ChEBI" id="CHEBI:156051"/>
    </reaction>
</comment>
<comment type="catalytic activity">
    <reaction evidence="1">
        <text>L-tyrosyl-[protein] + UTP = O-(5'-uridylyl)-L-tyrosyl-[protein] + diphosphate</text>
        <dbReference type="Rhea" id="RHEA:83887"/>
        <dbReference type="Rhea" id="RHEA-COMP:10136"/>
        <dbReference type="Rhea" id="RHEA-COMP:20238"/>
        <dbReference type="ChEBI" id="CHEBI:33019"/>
        <dbReference type="ChEBI" id="CHEBI:46398"/>
        <dbReference type="ChEBI" id="CHEBI:46858"/>
        <dbReference type="ChEBI" id="CHEBI:90602"/>
    </reaction>
</comment>
<comment type="cofactor">
    <cofactor evidence="1">
        <name>Mg(2+)</name>
        <dbReference type="ChEBI" id="CHEBI:18420"/>
    </cofactor>
    <cofactor evidence="1">
        <name>Mn(2+)</name>
        <dbReference type="ChEBI" id="CHEBI:29035"/>
    </cofactor>
</comment>
<comment type="similarity">
    <text evidence="1 2">Belongs to the SELO family.</text>
</comment>
<dbReference type="EC" id="2.7.7.-" evidence="1"/>
<dbReference type="EC" id="2.7.7.108" evidence="1"/>
<dbReference type="EMBL" id="BA000022">
    <property type="protein sequence ID" value="BAA17476.1"/>
    <property type="molecule type" value="Genomic_DNA"/>
</dbReference>
<dbReference type="PIR" id="S77373">
    <property type="entry name" value="S77373"/>
</dbReference>
<dbReference type="SMR" id="P73436"/>
<dbReference type="STRING" id="1148.gene:10498341"/>
<dbReference type="PaxDb" id="1148-1652555"/>
<dbReference type="EnsemblBacteria" id="BAA17476">
    <property type="protein sequence ID" value="BAA17476"/>
    <property type="gene ID" value="BAA17476"/>
</dbReference>
<dbReference type="KEGG" id="syn:sll1464"/>
<dbReference type="eggNOG" id="COG0397">
    <property type="taxonomic scope" value="Bacteria"/>
</dbReference>
<dbReference type="InParanoid" id="P73436"/>
<dbReference type="PhylomeDB" id="P73436"/>
<dbReference type="Proteomes" id="UP000001425">
    <property type="component" value="Chromosome"/>
</dbReference>
<dbReference type="GO" id="GO:0070733">
    <property type="term" value="F:AMPylase activity"/>
    <property type="evidence" value="ECO:0000318"/>
    <property type="project" value="GO_Central"/>
</dbReference>
<dbReference type="GO" id="GO:0005524">
    <property type="term" value="F:ATP binding"/>
    <property type="evidence" value="ECO:0007669"/>
    <property type="project" value="UniProtKB-UniRule"/>
</dbReference>
<dbReference type="GO" id="GO:0000287">
    <property type="term" value="F:magnesium ion binding"/>
    <property type="evidence" value="ECO:0007669"/>
    <property type="project" value="UniProtKB-UniRule"/>
</dbReference>
<dbReference type="HAMAP" id="MF_00692">
    <property type="entry name" value="YdiU_SelO"/>
    <property type="match status" value="1"/>
</dbReference>
<dbReference type="InterPro" id="IPR003846">
    <property type="entry name" value="SelO"/>
</dbReference>
<dbReference type="NCBIfam" id="NF000658">
    <property type="entry name" value="PRK00029.1"/>
    <property type="match status" value="1"/>
</dbReference>
<dbReference type="PANTHER" id="PTHR32057">
    <property type="entry name" value="PROTEIN ADENYLYLTRANSFERASE SELO, MITOCHONDRIAL"/>
    <property type="match status" value="1"/>
</dbReference>
<dbReference type="PANTHER" id="PTHR32057:SF14">
    <property type="entry name" value="PROTEIN ADENYLYLTRANSFERASE SELO, MITOCHONDRIAL"/>
    <property type="match status" value="1"/>
</dbReference>
<dbReference type="Pfam" id="PF02696">
    <property type="entry name" value="SelO"/>
    <property type="match status" value="1"/>
</dbReference>
<organism>
    <name type="scientific">Synechocystis sp. (strain ATCC 27184 / PCC 6803 / Kazusa)</name>
    <dbReference type="NCBI Taxonomy" id="1111708"/>
    <lineage>
        <taxon>Bacteria</taxon>
        <taxon>Bacillati</taxon>
        <taxon>Cyanobacteriota</taxon>
        <taxon>Cyanophyceae</taxon>
        <taxon>Synechococcales</taxon>
        <taxon>Merismopediaceae</taxon>
        <taxon>Synechocystis</taxon>
    </lineage>
</organism>
<sequence>MTNPFLNLTYEPALESLGNEFFDPVSAATFPEHKLRFRNDRLLPMLGLEPSQVKDDNFVEAFGLFHGVRPFLALRYHGYQFGEYNPNLGDGRGFLYGQVRGVNGELFDFGTKGSGQTPYSRGGDGRLTLKGGVREVLAAEALHRLGVKTSRCLSLVETGDSLWRGDEPSPTRASVMIRFSRSHIRFGTFERLHYHHQTEQIAQLLDHVIVTYYPEVSGSNSDDSAHIAFFRVLVERVAKLVAQWMAAGFCHGVLNTDNMSITGESFDYGPYGFVPTYDLNFIAAYFDYGGRYRFGNQPAVCRWNLERLQVSLSSVIPSKAMTEALEDYEKIYLGYYITLIARRLGISSTLGDRLDPELWEKLVGQTLQCLAQSQWSYPDFFAQLRLNFSPSWRDNADLILENVDLLGADWSTWRSIYQQVLKQLPPESLAAVPTVLEQANPLTDLLRPRIETVWQAIAEDDNWQPFNDLVQKLQSGN</sequence>
<protein>
    <recommendedName>
        <fullName evidence="1">Protein nucleotidyltransferase YdiU</fullName>
        <ecNumber evidence="1">2.7.7.-</ecNumber>
    </recommendedName>
    <alternativeName>
        <fullName evidence="1">Protein adenylyltransferase YdiU</fullName>
        <ecNumber evidence="1">2.7.7.108</ecNumber>
    </alternativeName>
    <alternativeName>
        <fullName evidence="1">Protein uridylyltransferase YdiU</fullName>
        <ecNumber evidence="1">2.7.7.-</ecNumber>
    </alternativeName>
</protein>
<gene>
    <name evidence="1" type="primary">ydiU</name>
    <name evidence="1" type="synonym">selO</name>
    <name type="ordered locus">sll1464</name>
</gene>